<sequence length="225" mass="24163">MCHVIVTCRSMLWTLLSIVAAFSELIAFLSTDWLVGFPRAPDAGFSPLGATAAGEAYRPTLGIYGRCIRVPHYRRGVLCGPYAVHFGEIASGFWQATAIFLAAGILLLCAVAFISIFTMCFQSIMKKSIFNVCGLLQAIAGLFLIVGLVLYPAGWGSQKVQLYCGPDSSPYRLGLCSAGWAFYTALAGTVLCFLCAVFSAQAEIATSSDKVQEEIQEGKSLICLL</sequence>
<dbReference type="EMBL" id="BC065671">
    <property type="protein sequence ID" value="AAH65671.1"/>
    <property type="molecule type" value="mRNA"/>
</dbReference>
<dbReference type="RefSeq" id="NP_991226.1">
    <property type="nucleotide sequence ID" value="NM_205663.1"/>
</dbReference>
<dbReference type="RefSeq" id="XP_021324467.1">
    <property type="nucleotide sequence ID" value="XM_021468792.2"/>
</dbReference>
<dbReference type="FunCoup" id="Q6P0C6">
    <property type="interactions" value="422"/>
</dbReference>
<dbReference type="STRING" id="7955.ENSDARP00000126075"/>
<dbReference type="PaxDb" id="7955-ENSDARP00000126208"/>
<dbReference type="Ensembl" id="ENSDART00000150913">
    <property type="protein sequence ID" value="ENSDARP00000126075"/>
    <property type="gene ID" value="ENSDARG00000009653"/>
</dbReference>
<dbReference type="Ensembl" id="ENSDART00000151613">
    <property type="protein sequence ID" value="ENSDARP00000126208"/>
    <property type="gene ID" value="ENSDARG00000009653"/>
</dbReference>
<dbReference type="GeneID" id="402962"/>
<dbReference type="KEGG" id="dre:402962"/>
<dbReference type="AGR" id="ZFIN:ZDB-GENE-040426-1839"/>
<dbReference type="CTD" id="402962"/>
<dbReference type="ZFIN" id="ZDB-GENE-040426-1839">
    <property type="gene designation" value="lhfpl2a"/>
</dbReference>
<dbReference type="eggNOG" id="KOG4026">
    <property type="taxonomic scope" value="Eukaryota"/>
</dbReference>
<dbReference type="InParanoid" id="Q6P0C6"/>
<dbReference type="OMA" id="PKWLVGP"/>
<dbReference type="OrthoDB" id="10048434at2759"/>
<dbReference type="PhylomeDB" id="Q6P0C6"/>
<dbReference type="Reactome" id="R-DRE-114608">
    <property type="pathway name" value="Platelet degranulation"/>
</dbReference>
<dbReference type="PRO" id="PR:Q6P0C6"/>
<dbReference type="Proteomes" id="UP000000437">
    <property type="component" value="Chromosome 21"/>
</dbReference>
<dbReference type="Bgee" id="ENSDARG00000009653">
    <property type="expression patterns" value="Expressed in intestine and 28 other cell types or tissues"/>
</dbReference>
<dbReference type="ExpressionAtlas" id="Q6P0C6">
    <property type="expression patterns" value="baseline and differential"/>
</dbReference>
<dbReference type="GO" id="GO:0016020">
    <property type="term" value="C:membrane"/>
    <property type="evidence" value="ECO:0000318"/>
    <property type="project" value="GO_Central"/>
</dbReference>
<dbReference type="GO" id="GO:0046545">
    <property type="term" value="P:development of primary female sexual characteristics"/>
    <property type="evidence" value="ECO:0000250"/>
    <property type="project" value="UniProtKB"/>
</dbReference>
<dbReference type="GO" id="GO:0046546">
    <property type="term" value="P:development of primary male sexual characteristics"/>
    <property type="evidence" value="ECO:0000250"/>
    <property type="project" value="UniProtKB"/>
</dbReference>
<dbReference type="GO" id="GO:1905516">
    <property type="term" value="P:positive regulation of fertilization"/>
    <property type="evidence" value="ECO:0000250"/>
    <property type="project" value="UniProtKB"/>
</dbReference>
<dbReference type="GO" id="GO:0007338">
    <property type="term" value="P:single fertilization"/>
    <property type="evidence" value="ECO:0007669"/>
    <property type="project" value="UniProtKB-KW"/>
</dbReference>
<dbReference type="FunFam" id="1.20.140.150:FF:000020">
    <property type="entry name" value="lipoma HMGIC fusion partner-like 2 protein"/>
    <property type="match status" value="1"/>
</dbReference>
<dbReference type="Gene3D" id="1.20.140.150">
    <property type="match status" value="1"/>
</dbReference>
<dbReference type="InterPro" id="IPR019372">
    <property type="entry name" value="LHFPL"/>
</dbReference>
<dbReference type="PANTHER" id="PTHR12489:SF19">
    <property type="entry name" value="LHFPL TETRASPAN SUBFAMILY MEMBER 2 PROTEIN"/>
    <property type="match status" value="1"/>
</dbReference>
<dbReference type="PANTHER" id="PTHR12489">
    <property type="entry name" value="LIPOMA HMGIC FUSION PARTNER-LIKE PROTEIN"/>
    <property type="match status" value="1"/>
</dbReference>
<dbReference type="Pfam" id="PF10242">
    <property type="entry name" value="L_HMGIC_fpl"/>
    <property type="match status" value="1"/>
</dbReference>
<organism>
    <name type="scientific">Danio rerio</name>
    <name type="common">Zebrafish</name>
    <name type="synonym">Brachydanio rerio</name>
    <dbReference type="NCBI Taxonomy" id="7955"/>
    <lineage>
        <taxon>Eukaryota</taxon>
        <taxon>Metazoa</taxon>
        <taxon>Chordata</taxon>
        <taxon>Craniata</taxon>
        <taxon>Vertebrata</taxon>
        <taxon>Euteleostomi</taxon>
        <taxon>Actinopterygii</taxon>
        <taxon>Neopterygii</taxon>
        <taxon>Teleostei</taxon>
        <taxon>Ostariophysi</taxon>
        <taxon>Cypriniformes</taxon>
        <taxon>Danionidae</taxon>
        <taxon>Danioninae</taxon>
        <taxon>Danio</taxon>
    </lineage>
</organism>
<feature type="chain" id="PRO_0000244765" description="LHFPL tetraspan subfamily member 2a protein">
    <location>
        <begin position="1"/>
        <end position="225"/>
    </location>
</feature>
<feature type="transmembrane region" description="Helical" evidence="3">
    <location>
        <begin position="11"/>
        <end position="31"/>
    </location>
</feature>
<feature type="transmembrane region" description="Helical" evidence="3">
    <location>
        <begin position="99"/>
        <end position="119"/>
    </location>
</feature>
<feature type="transmembrane region" description="Helical" evidence="3">
    <location>
        <begin position="129"/>
        <end position="149"/>
    </location>
</feature>
<feature type="transmembrane region" description="Helical" evidence="3">
    <location>
        <begin position="178"/>
        <end position="198"/>
    </location>
</feature>
<gene>
    <name evidence="1" type="primary">lhfpl2a</name>
    <name type="ORF">zgc:77456</name>
</gene>
<protein>
    <recommendedName>
        <fullName evidence="1">LHFPL tetraspan subfamily member 2a protein</fullName>
    </recommendedName>
</protein>
<proteinExistence type="evidence at transcript level"/>
<accession>Q6P0C6</accession>
<reference key="1">
    <citation type="submission" date="2004-01" db="EMBL/GenBank/DDBJ databases">
        <authorList>
            <consortium name="NIH - Zebrafish Gene Collection (ZGC) project"/>
        </authorList>
    </citation>
    <scope>NUCLEOTIDE SEQUENCE [LARGE SCALE MRNA]</scope>
    <source>
        <tissue>Embryo</tissue>
    </source>
</reference>
<comment type="function">
    <text evidence="2">Plays a role in fertility. Involved in distal reproductive tract development.</text>
</comment>
<comment type="subcellular location">
    <subcellularLocation>
        <location evidence="4">Membrane</location>
        <topology evidence="4">Multi-pass membrane protein</topology>
    </subcellularLocation>
</comment>
<comment type="similarity">
    <text evidence="4">Belongs to the LHFP family.</text>
</comment>
<evidence type="ECO:0000250" key="1">
    <source>
        <dbReference type="UniProtKB" id="Q6ZUX7"/>
    </source>
</evidence>
<evidence type="ECO:0000250" key="2">
    <source>
        <dbReference type="UniProtKB" id="Q8BGA2"/>
    </source>
</evidence>
<evidence type="ECO:0000255" key="3"/>
<evidence type="ECO:0000305" key="4"/>
<keyword id="KW-0278">Fertilization</keyword>
<keyword id="KW-0472">Membrane</keyword>
<keyword id="KW-1185">Reference proteome</keyword>
<keyword id="KW-0812">Transmembrane</keyword>
<keyword id="KW-1133">Transmembrane helix</keyword>
<name>LHPL2_DANRE</name>